<feature type="chain" id="PRO_0000211850" description="UPF0325 protein VV2560">
    <location>
        <begin position="1"/>
        <end position="127"/>
    </location>
</feature>
<comment type="similarity">
    <text evidence="1">Belongs to the UPF0325 family.</text>
</comment>
<name>Y2560_VIBVY</name>
<gene>
    <name type="ordered locus">VV2560</name>
</gene>
<evidence type="ECO:0000255" key="1">
    <source>
        <dbReference type="HAMAP-Rule" id="MF_01519"/>
    </source>
</evidence>
<reference key="1">
    <citation type="journal article" date="2003" name="Genome Res.">
        <title>Comparative genome analysis of Vibrio vulnificus, a marine pathogen.</title>
        <authorList>
            <person name="Chen C.-Y."/>
            <person name="Wu K.-M."/>
            <person name="Chang Y.-C."/>
            <person name="Chang C.-H."/>
            <person name="Tsai H.-C."/>
            <person name="Liao T.-L."/>
            <person name="Liu Y.-M."/>
            <person name="Chen H.-J."/>
            <person name="Shen A.B.-T."/>
            <person name="Li J.-C."/>
            <person name="Su T.-L."/>
            <person name="Shao C.-P."/>
            <person name="Lee C.-T."/>
            <person name="Hor L.-I."/>
            <person name="Tsai S.-F."/>
        </authorList>
    </citation>
    <scope>NUCLEOTIDE SEQUENCE [LARGE SCALE GENOMIC DNA]</scope>
    <source>
        <strain>YJ016</strain>
    </source>
</reference>
<protein>
    <recommendedName>
        <fullName evidence="1">UPF0325 protein VV2560</fullName>
    </recommendedName>
</protein>
<proteinExistence type="inferred from homology"/>
<dbReference type="EMBL" id="BA000037">
    <property type="protein sequence ID" value="BAC95324.1"/>
    <property type="molecule type" value="Genomic_DNA"/>
</dbReference>
<dbReference type="RefSeq" id="WP_011079759.1">
    <property type="nucleotide sequence ID" value="NC_005139.1"/>
</dbReference>
<dbReference type="SMR" id="Q7MIF7"/>
<dbReference type="STRING" id="672.VV93_v1c22790"/>
<dbReference type="KEGG" id="vvy:VV2560"/>
<dbReference type="eggNOG" id="ENOG502ZBV4">
    <property type="taxonomic scope" value="Bacteria"/>
</dbReference>
<dbReference type="HOGENOM" id="CLU_136774_0_0_6"/>
<dbReference type="Proteomes" id="UP000002675">
    <property type="component" value="Chromosome I"/>
</dbReference>
<dbReference type="HAMAP" id="MF_01519">
    <property type="entry name" value="UPF0325"/>
    <property type="match status" value="1"/>
</dbReference>
<dbReference type="InterPro" id="IPR020911">
    <property type="entry name" value="UPF0325"/>
</dbReference>
<dbReference type="NCBIfam" id="NF010213">
    <property type="entry name" value="PRK13677.1"/>
    <property type="match status" value="1"/>
</dbReference>
<dbReference type="Pfam" id="PF11944">
    <property type="entry name" value="DUF3461"/>
    <property type="match status" value="1"/>
</dbReference>
<organism>
    <name type="scientific">Vibrio vulnificus (strain YJ016)</name>
    <dbReference type="NCBI Taxonomy" id="196600"/>
    <lineage>
        <taxon>Bacteria</taxon>
        <taxon>Pseudomonadati</taxon>
        <taxon>Pseudomonadota</taxon>
        <taxon>Gammaproteobacteria</taxon>
        <taxon>Vibrionales</taxon>
        <taxon>Vibrionaceae</taxon>
        <taxon>Vibrio</taxon>
    </lineage>
</organism>
<sequence length="127" mass="14822">MYPHLTGLGIHDPSQIERYSLRQEAHKDVLKIYFHKQKGEFFAKSVKFKYPRQVKNVLVDSGSHQYKEVTEINRNLTLVIDELNKITKPPKQEDVDIKQKILTDLKHLEKVVASKIAEIEADLEKLK</sequence>
<accession>Q7MIF7</accession>